<keyword id="KW-0249">Electron transport</keyword>
<keyword id="KW-0349">Heme</keyword>
<keyword id="KW-0408">Iron</keyword>
<keyword id="KW-0472">Membrane</keyword>
<keyword id="KW-0479">Metal-binding</keyword>
<keyword id="KW-0496">Mitochondrion</keyword>
<keyword id="KW-0999">Mitochondrion inner membrane</keyword>
<keyword id="KW-0679">Respiratory chain</keyword>
<keyword id="KW-0812">Transmembrane</keyword>
<keyword id="KW-1133">Transmembrane helix</keyword>
<keyword id="KW-0813">Transport</keyword>
<keyword id="KW-0830">Ubiquinone</keyword>
<sequence length="379" mass="42334">MTTIRKNHPLFKAANSALIDLPAPASLSSLWNFGSLLGLCLISQIATGLFLAMHYAPETSSAFASVAHICRDVNYGWLIRNMHANGASFFFVCIYIHIGRGLYYGSYLYKETWNIGVVLLLLVMMTAFVGYVLPWGQMSFWGATVITNLLSAVPYIGESLVQWLWGGFAVDNATLTRFFAFHFLLPFVILALTLIHLIFLHETGSNNPLGLPSNSDKIPFHPYYTIKDIFGFLVLLFALISLALFAPNLLGDPDNFTPANSMVTPAHIKPEWYFLFAYAILRSIPNKLGGVIALLCSILVLLVVPILHTSKHRSLTFRPITQFLFWLLIADVLVLTWIGGMPVEAPYIITGQIASALYFSLFLILMPMASWLENKMLTW</sequence>
<evidence type="ECO:0000250" key="1"/>
<evidence type="ECO:0000250" key="2">
    <source>
        <dbReference type="UniProtKB" id="P00157"/>
    </source>
</evidence>
<evidence type="ECO:0000255" key="3">
    <source>
        <dbReference type="PROSITE-ProRule" id="PRU00967"/>
    </source>
</evidence>
<evidence type="ECO:0000255" key="4">
    <source>
        <dbReference type="PROSITE-ProRule" id="PRU00968"/>
    </source>
</evidence>
<protein>
    <recommendedName>
        <fullName>Cytochrome b</fullName>
    </recommendedName>
    <alternativeName>
        <fullName>Complex III subunit 3</fullName>
    </alternativeName>
    <alternativeName>
        <fullName>Complex III subunit III</fullName>
    </alternativeName>
    <alternativeName>
        <fullName>Cytochrome b-c1 complex subunit 3</fullName>
    </alternativeName>
    <alternativeName>
        <fullName>Ubiquinol-cytochrome-c reductase complex cytochrome b subunit</fullName>
    </alternativeName>
</protein>
<reference key="1">
    <citation type="journal article" date="2001" name="Mol. Biol. Evol.">
        <title>Mitogenomic exploration of higher teleostean phylogenies: a case study for moderate-scale evolutionary genomics with 38 newly determined complete mitochondrial DNA sequences.</title>
        <authorList>
            <person name="Miya M."/>
            <person name="Kawaguchi A."/>
            <person name="Nishida M."/>
        </authorList>
    </citation>
    <scope>NUCLEOTIDE SEQUENCE [GENOMIC DNA]</scope>
</reference>
<name>CYB_CRECR</name>
<feature type="chain" id="PRO_0000060822" description="Cytochrome b">
    <location>
        <begin position="1"/>
        <end position="379"/>
    </location>
</feature>
<feature type="transmembrane region" description="Helical" evidence="2">
    <location>
        <begin position="33"/>
        <end position="53"/>
    </location>
</feature>
<feature type="transmembrane region" description="Helical" evidence="2">
    <location>
        <begin position="77"/>
        <end position="98"/>
    </location>
</feature>
<feature type="transmembrane region" description="Helical" evidence="2">
    <location>
        <begin position="113"/>
        <end position="133"/>
    </location>
</feature>
<feature type="transmembrane region" description="Helical" evidence="2">
    <location>
        <begin position="178"/>
        <end position="198"/>
    </location>
</feature>
<feature type="transmembrane region" description="Helical" evidence="2">
    <location>
        <begin position="226"/>
        <end position="246"/>
    </location>
</feature>
<feature type="transmembrane region" description="Helical" evidence="2">
    <location>
        <begin position="288"/>
        <end position="308"/>
    </location>
</feature>
<feature type="transmembrane region" description="Helical" evidence="2">
    <location>
        <begin position="320"/>
        <end position="340"/>
    </location>
</feature>
<feature type="transmembrane region" description="Helical" evidence="2">
    <location>
        <begin position="347"/>
        <end position="367"/>
    </location>
</feature>
<feature type="binding site" description="axial binding residue" evidence="2">
    <location>
        <position position="83"/>
    </location>
    <ligand>
        <name>heme b</name>
        <dbReference type="ChEBI" id="CHEBI:60344"/>
        <label>b562</label>
    </ligand>
    <ligandPart>
        <name>Fe</name>
        <dbReference type="ChEBI" id="CHEBI:18248"/>
    </ligandPart>
</feature>
<feature type="binding site" description="axial binding residue" evidence="2">
    <location>
        <position position="97"/>
    </location>
    <ligand>
        <name>heme b</name>
        <dbReference type="ChEBI" id="CHEBI:60344"/>
        <label>b566</label>
    </ligand>
    <ligandPart>
        <name>Fe</name>
        <dbReference type="ChEBI" id="CHEBI:18248"/>
    </ligandPart>
</feature>
<feature type="binding site" description="axial binding residue" evidence="2">
    <location>
        <position position="182"/>
    </location>
    <ligand>
        <name>heme b</name>
        <dbReference type="ChEBI" id="CHEBI:60344"/>
        <label>b562</label>
    </ligand>
    <ligandPart>
        <name>Fe</name>
        <dbReference type="ChEBI" id="CHEBI:18248"/>
    </ligandPart>
</feature>
<feature type="binding site" description="axial binding residue" evidence="2">
    <location>
        <position position="196"/>
    </location>
    <ligand>
        <name>heme b</name>
        <dbReference type="ChEBI" id="CHEBI:60344"/>
        <label>b566</label>
    </ligand>
    <ligandPart>
        <name>Fe</name>
        <dbReference type="ChEBI" id="CHEBI:18248"/>
    </ligandPart>
</feature>
<feature type="binding site" evidence="2">
    <location>
        <position position="201"/>
    </location>
    <ligand>
        <name>a ubiquinone</name>
        <dbReference type="ChEBI" id="CHEBI:16389"/>
    </ligand>
</feature>
<geneLocation type="mitochondrion"/>
<proteinExistence type="inferred from homology"/>
<organism>
    <name type="scientific">Crenimugil crenilabis</name>
    <name type="common">Fringelip mullet</name>
    <name type="synonym">Mugil crenilabis</name>
    <dbReference type="NCBI Taxonomy" id="143330"/>
    <lineage>
        <taxon>Eukaryota</taxon>
        <taxon>Metazoa</taxon>
        <taxon>Chordata</taxon>
        <taxon>Craniata</taxon>
        <taxon>Vertebrata</taxon>
        <taxon>Euteleostomi</taxon>
        <taxon>Actinopterygii</taxon>
        <taxon>Neopterygii</taxon>
        <taxon>Teleostei</taxon>
        <taxon>Neoteleostei</taxon>
        <taxon>Acanthomorphata</taxon>
        <taxon>Ovalentaria</taxon>
        <taxon>Mugilomorphae</taxon>
        <taxon>Mugilidae</taxon>
        <taxon>Crenimugil</taxon>
    </lineage>
</organism>
<gene>
    <name type="primary">mt-cyb</name>
    <name type="synonym">cob</name>
    <name type="synonym">cytb</name>
    <name type="synonym">mtcyb</name>
</gene>
<comment type="function">
    <text evidence="2">Component of the ubiquinol-cytochrome c reductase complex (complex III or cytochrome b-c1 complex) that is part of the mitochondrial respiratory chain. The b-c1 complex mediates electron transfer from ubiquinol to cytochrome c. Contributes to the generation of a proton gradient across the mitochondrial membrane that is then used for ATP synthesis.</text>
</comment>
<comment type="cofactor">
    <cofactor evidence="2">
        <name>heme b</name>
        <dbReference type="ChEBI" id="CHEBI:60344"/>
    </cofactor>
    <text evidence="2">Binds 2 heme b groups non-covalently.</text>
</comment>
<comment type="subunit">
    <text evidence="2">The cytochrome bc1 complex contains 3 respiratory subunits (MT-CYB, CYC1 and UQCRFS1), 2 core proteins (UQCRC1 and UQCRC2) and probably 6 low-molecular weight proteins.</text>
</comment>
<comment type="subcellular location">
    <subcellularLocation>
        <location evidence="2">Mitochondrion inner membrane</location>
        <topology evidence="2">Multi-pass membrane protein</topology>
    </subcellularLocation>
</comment>
<comment type="miscellaneous">
    <text evidence="1">Heme 1 (or BL or b562) is low-potential and absorbs at about 562 nm, and heme 2 (or BH or b566) is high-potential and absorbs at about 566 nm.</text>
</comment>
<comment type="similarity">
    <text evidence="3 4">Belongs to the cytochrome b family.</text>
</comment>
<comment type="caution">
    <text evidence="2">The full-length protein contains only eight transmembrane helices, not nine as predicted by bioinformatics tools.</text>
</comment>
<accession>Q8WFX3</accession>
<dbReference type="EMBL" id="AP002931">
    <property type="protein sequence ID" value="BAB70195.2"/>
    <property type="molecule type" value="Genomic_DNA"/>
</dbReference>
<dbReference type="SMR" id="Q8WFX3"/>
<dbReference type="GO" id="GO:0005743">
    <property type="term" value="C:mitochondrial inner membrane"/>
    <property type="evidence" value="ECO:0007669"/>
    <property type="project" value="UniProtKB-SubCell"/>
</dbReference>
<dbReference type="GO" id="GO:0045275">
    <property type="term" value="C:respiratory chain complex III"/>
    <property type="evidence" value="ECO:0007669"/>
    <property type="project" value="InterPro"/>
</dbReference>
<dbReference type="GO" id="GO:0046872">
    <property type="term" value="F:metal ion binding"/>
    <property type="evidence" value="ECO:0007669"/>
    <property type="project" value="UniProtKB-KW"/>
</dbReference>
<dbReference type="GO" id="GO:0008121">
    <property type="term" value="F:ubiquinol-cytochrome-c reductase activity"/>
    <property type="evidence" value="ECO:0007669"/>
    <property type="project" value="InterPro"/>
</dbReference>
<dbReference type="GO" id="GO:0006122">
    <property type="term" value="P:mitochondrial electron transport, ubiquinol to cytochrome c"/>
    <property type="evidence" value="ECO:0007669"/>
    <property type="project" value="TreeGrafter"/>
</dbReference>
<dbReference type="CDD" id="cd00290">
    <property type="entry name" value="cytochrome_b_C"/>
    <property type="match status" value="1"/>
</dbReference>
<dbReference type="CDD" id="cd00284">
    <property type="entry name" value="Cytochrome_b_N"/>
    <property type="match status" value="1"/>
</dbReference>
<dbReference type="FunFam" id="1.20.810.10:FF:000002">
    <property type="entry name" value="Cytochrome b"/>
    <property type="match status" value="1"/>
</dbReference>
<dbReference type="Gene3D" id="1.20.810.10">
    <property type="entry name" value="Cytochrome Bc1 Complex, Chain C"/>
    <property type="match status" value="1"/>
</dbReference>
<dbReference type="InterPro" id="IPR005798">
    <property type="entry name" value="Cyt_b/b6_C"/>
</dbReference>
<dbReference type="InterPro" id="IPR036150">
    <property type="entry name" value="Cyt_b/b6_C_sf"/>
</dbReference>
<dbReference type="InterPro" id="IPR005797">
    <property type="entry name" value="Cyt_b/b6_N"/>
</dbReference>
<dbReference type="InterPro" id="IPR027387">
    <property type="entry name" value="Cytb/b6-like_sf"/>
</dbReference>
<dbReference type="InterPro" id="IPR030689">
    <property type="entry name" value="Cytochrome_b"/>
</dbReference>
<dbReference type="InterPro" id="IPR048260">
    <property type="entry name" value="Cytochrome_b_C_euk/bac"/>
</dbReference>
<dbReference type="InterPro" id="IPR048259">
    <property type="entry name" value="Cytochrome_b_N_euk/bac"/>
</dbReference>
<dbReference type="InterPro" id="IPR016174">
    <property type="entry name" value="Di-haem_cyt_TM"/>
</dbReference>
<dbReference type="PANTHER" id="PTHR19271">
    <property type="entry name" value="CYTOCHROME B"/>
    <property type="match status" value="1"/>
</dbReference>
<dbReference type="PANTHER" id="PTHR19271:SF16">
    <property type="entry name" value="CYTOCHROME B"/>
    <property type="match status" value="1"/>
</dbReference>
<dbReference type="Pfam" id="PF00032">
    <property type="entry name" value="Cytochrom_B_C"/>
    <property type="match status" value="1"/>
</dbReference>
<dbReference type="Pfam" id="PF00033">
    <property type="entry name" value="Cytochrome_B"/>
    <property type="match status" value="1"/>
</dbReference>
<dbReference type="PIRSF" id="PIRSF038885">
    <property type="entry name" value="COB"/>
    <property type="match status" value="1"/>
</dbReference>
<dbReference type="SUPFAM" id="SSF81648">
    <property type="entry name" value="a domain/subunit of cytochrome bc1 complex (Ubiquinol-cytochrome c reductase)"/>
    <property type="match status" value="1"/>
</dbReference>
<dbReference type="SUPFAM" id="SSF81342">
    <property type="entry name" value="Transmembrane di-heme cytochromes"/>
    <property type="match status" value="1"/>
</dbReference>
<dbReference type="PROSITE" id="PS51003">
    <property type="entry name" value="CYTB_CTER"/>
    <property type="match status" value="1"/>
</dbReference>
<dbReference type="PROSITE" id="PS51002">
    <property type="entry name" value="CYTB_NTER"/>
    <property type="match status" value="1"/>
</dbReference>